<reference key="1">
    <citation type="journal article" date="2003" name="Nature">
        <title>Unique physiological and pathogenic features of Leptospira interrogans revealed by whole-genome sequencing.</title>
        <authorList>
            <person name="Ren S.-X."/>
            <person name="Fu G."/>
            <person name="Jiang X.-G."/>
            <person name="Zeng R."/>
            <person name="Miao Y.-G."/>
            <person name="Xu H."/>
            <person name="Zhang Y.-X."/>
            <person name="Xiong H."/>
            <person name="Lu G."/>
            <person name="Lu L.-F."/>
            <person name="Jiang H.-Q."/>
            <person name="Jia J."/>
            <person name="Tu Y.-F."/>
            <person name="Jiang J.-X."/>
            <person name="Gu W.-Y."/>
            <person name="Zhang Y.-Q."/>
            <person name="Cai Z."/>
            <person name="Sheng H.-H."/>
            <person name="Yin H.-F."/>
            <person name="Zhang Y."/>
            <person name="Zhu G.-F."/>
            <person name="Wan M."/>
            <person name="Huang H.-L."/>
            <person name="Qian Z."/>
            <person name="Wang S.-Y."/>
            <person name="Ma W."/>
            <person name="Yao Z.-J."/>
            <person name="Shen Y."/>
            <person name="Qiang B.-Q."/>
            <person name="Xia Q.-C."/>
            <person name="Guo X.-K."/>
            <person name="Danchin A."/>
            <person name="Saint Girons I."/>
            <person name="Somerville R.L."/>
            <person name="Wen Y.-M."/>
            <person name="Shi M.-H."/>
            <person name="Chen Z."/>
            <person name="Xu J.-G."/>
            <person name="Zhao G.-P."/>
        </authorList>
    </citation>
    <scope>NUCLEOTIDE SEQUENCE [LARGE SCALE GENOMIC DNA]</scope>
    <source>
        <strain>56601</strain>
    </source>
</reference>
<keyword id="KW-0963">Cytoplasm</keyword>
<keyword id="KW-0227">DNA damage</keyword>
<keyword id="KW-0234">DNA repair</keyword>
<keyword id="KW-0235">DNA replication</keyword>
<keyword id="KW-0238">DNA-binding</keyword>
<keyword id="KW-0239">DNA-directed DNA polymerase</keyword>
<keyword id="KW-0460">Magnesium</keyword>
<keyword id="KW-0479">Metal-binding</keyword>
<keyword id="KW-0515">Mutator protein</keyword>
<keyword id="KW-0548">Nucleotidyltransferase</keyword>
<keyword id="KW-1185">Reference proteome</keyword>
<keyword id="KW-0808">Transferase</keyword>
<accession>Q8F8Q2</accession>
<dbReference type="EC" id="2.7.7.7" evidence="1"/>
<dbReference type="EMBL" id="AE010300">
    <property type="protein sequence ID" value="AAN47702.2"/>
    <property type="molecule type" value="Genomic_DNA"/>
</dbReference>
<dbReference type="RefSeq" id="NP_710684.2">
    <property type="nucleotide sequence ID" value="NC_004342.2"/>
</dbReference>
<dbReference type="RefSeq" id="WP_000450036.1">
    <property type="nucleotide sequence ID" value="NC_004342.2"/>
</dbReference>
<dbReference type="SMR" id="Q8F8Q2"/>
<dbReference type="FunCoup" id="Q8F8Q2">
    <property type="interactions" value="413"/>
</dbReference>
<dbReference type="STRING" id="189518.LA_0503"/>
<dbReference type="PaxDb" id="189518-LA_0503"/>
<dbReference type="EnsemblBacteria" id="AAN47702">
    <property type="protein sequence ID" value="AAN47702"/>
    <property type="gene ID" value="LA_0503"/>
</dbReference>
<dbReference type="KEGG" id="lil:LA_0503"/>
<dbReference type="PATRIC" id="fig|189518.3.peg.508"/>
<dbReference type="HOGENOM" id="CLU_012348_1_2_12"/>
<dbReference type="InParanoid" id="Q8F8Q2"/>
<dbReference type="OrthoDB" id="9808813at2"/>
<dbReference type="Proteomes" id="UP000001408">
    <property type="component" value="Chromosome I"/>
</dbReference>
<dbReference type="GO" id="GO:0005737">
    <property type="term" value="C:cytoplasm"/>
    <property type="evidence" value="ECO:0007669"/>
    <property type="project" value="UniProtKB-SubCell"/>
</dbReference>
<dbReference type="GO" id="GO:0003684">
    <property type="term" value="F:damaged DNA binding"/>
    <property type="evidence" value="ECO:0007669"/>
    <property type="project" value="InterPro"/>
</dbReference>
<dbReference type="GO" id="GO:0003887">
    <property type="term" value="F:DNA-directed DNA polymerase activity"/>
    <property type="evidence" value="ECO:0000318"/>
    <property type="project" value="GO_Central"/>
</dbReference>
<dbReference type="GO" id="GO:0000287">
    <property type="term" value="F:magnesium ion binding"/>
    <property type="evidence" value="ECO:0007669"/>
    <property type="project" value="UniProtKB-UniRule"/>
</dbReference>
<dbReference type="GO" id="GO:0006261">
    <property type="term" value="P:DNA-templated DNA replication"/>
    <property type="evidence" value="ECO:0007669"/>
    <property type="project" value="UniProtKB-UniRule"/>
</dbReference>
<dbReference type="GO" id="GO:0042276">
    <property type="term" value="P:error-prone translesion synthesis"/>
    <property type="evidence" value="ECO:0000318"/>
    <property type="project" value="GO_Central"/>
</dbReference>
<dbReference type="GO" id="GO:0009432">
    <property type="term" value="P:SOS response"/>
    <property type="evidence" value="ECO:0000318"/>
    <property type="project" value="GO_Central"/>
</dbReference>
<dbReference type="CDD" id="cd03586">
    <property type="entry name" value="PolY_Pol_IV_kappa"/>
    <property type="match status" value="1"/>
</dbReference>
<dbReference type="FunFam" id="1.10.150.20:FF:000019">
    <property type="entry name" value="DNA polymerase IV"/>
    <property type="match status" value="1"/>
</dbReference>
<dbReference type="FunFam" id="3.30.1490.100:FF:000004">
    <property type="entry name" value="DNA polymerase IV"/>
    <property type="match status" value="1"/>
</dbReference>
<dbReference type="FunFam" id="3.40.1170.60:FF:000001">
    <property type="entry name" value="DNA polymerase IV"/>
    <property type="match status" value="1"/>
</dbReference>
<dbReference type="Gene3D" id="3.30.70.270">
    <property type="match status" value="1"/>
</dbReference>
<dbReference type="Gene3D" id="3.40.1170.60">
    <property type="match status" value="1"/>
</dbReference>
<dbReference type="Gene3D" id="1.10.150.20">
    <property type="entry name" value="5' to 3' exonuclease, C-terminal subdomain"/>
    <property type="match status" value="1"/>
</dbReference>
<dbReference type="Gene3D" id="3.30.1490.100">
    <property type="entry name" value="DNA polymerase, Y-family, little finger domain"/>
    <property type="match status" value="1"/>
</dbReference>
<dbReference type="HAMAP" id="MF_01113">
    <property type="entry name" value="DNApol_IV"/>
    <property type="match status" value="1"/>
</dbReference>
<dbReference type="InterPro" id="IPR043502">
    <property type="entry name" value="DNA/RNA_pol_sf"/>
</dbReference>
<dbReference type="InterPro" id="IPR036775">
    <property type="entry name" value="DNA_pol_Y-fam_lit_finger_sf"/>
</dbReference>
<dbReference type="InterPro" id="IPR017961">
    <property type="entry name" value="DNA_pol_Y-fam_little_finger"/>
</dbReference>
<dbReference type="InterPro" id="IPR050116">
    <property type="entry name" value="DNA_polymerase-Y"/>
</dbReference>
<dbReference type="InterPro" id="IPR022880">
    <property type="entry name" value="DNApol_IV"/>
</dbReference>
<dbReference type="InterPro" id="IPR024728">
    <property type="entry name" value="PolY_HhH_motif"/>
</dbReference>
<dbReference type="InterPro" id="IPR043128">
    <property type="entry name" value="Rev_trsase/Diguanyl_cyclase"/>
</dbReference>
<dbReference type="InterPro" id="IPR001126">
    <property type="entry name" value="UmuC"/>
</dbReference>
<dbReference type="NCBIfam" id="NF002677">
    <property type="entry name" value="PRK02406.1"/>
    <property type="match status" value="1"/>
</dbReference>
<dbReference type="PANTHER" id="PTHR11076:SF33">
    <property type="entry name" value="DNA POLYMERASE KAPPA"/>
    <property type="match status" value="1"/>
</dbReference>
<dbReference type="PANTHER" id="PTHR11076">
    <property type="entry name" value="DNA REPAIR POLYMERASE UMUC / TRANSFERASE FAMILY MEMBER"/>
    <property type="match status" value="1"/>
</dbReference>
<dbReference type="Pfam" id="PF00817">
    <property type="entry name" value="IMS"/>
    <property type="match status" value="1"/>
</dbReference>
<dbReference type="Pfam" id="PF11799">
    <property type="entry name" value="IMS_C"/>
    <property type="match status" value="1"/>
</dbReference>
<dbReference type="Pfam" id="PF11798">
    <property type="entry name" value="IMS_HHH"/>
    <property type="match status" value="1"/>
</dbReference>
<dbReference type="SUPFAM" id="SSF56672">
    <property type="entry name" value="DNA/RNA polymerases"/>
    <property type="match status" value="1"/>
</dbReference>
<dbReference type="SUPFAM" id="SSF100879">
    <property type="entry name" value="Lesion bypass DNA polymerase (Y-family), little finger domain"/>
    <property type="match status" value="1"/>
</dbReference>
<dbReference type="PROSITE" id="PS50173">
    <property type="entry name" value="UMUC"/>
    <property type="match status" value="1"/>
</dbReference>
<feature type="chain" id="PRO_0000173920" description="DNA polymerase IV">
    <location>
        <begin position="1"/>
        <end position="362"/>
    </location>
</feature>
<feature type="domain" description="UmuC" evidence="1">
    <location>
        <begin position="6"/>
        <end position="187"/>
    </location>
</feature>
<feature type="active site" evidence="1">
    <location>
        <position position="106"/>
    </location>
</feature>
<feature type="binding site" evidence="1">
    <location>
        <position position="10"/>
    </location>
    <ligand>
        <name>Mg(2+)</name>
        <dbReference type="ChEBI" id="CHEBI:18420"/>
    </ligand>
</feature>
<feature type="binding site" evidence="1">
    <location>
        <position position="105"/>
    </location>
    <ligand>
        <name>Mg(2+)</name>
        <dbReference type="ChEBI" id="CHEBI:18420"/>
    </ligand>
</feature>
<feature type="site" description="Substrate discrimination" evidence="1">
    <location>
        <position position="15"/>
    </location>
</feature>
<sequence length="362" mass="41146">METRKIIHVDMDAFYASVEQRDFPEYKGKPLIVGGPPNSRSVVSAASYEARKFGVRSAMPCSKAAQLAPQAIFVFPRFEVYKEVSKQIREIFLEYTDLVEMLSLDEGYLDVTFNKKNIPYAVTIAKEIRTEIFKRTELTASAGVGNSKFISKLASEKNKPNGLTVVLPDDVISFIDPLPVSSFHGVGKVTARKMKELGIYTGKDLRTKSIDELVQHFGKMGIYYYKISRGEDERMVQSSRERKSLGAESTFDRDKLDYDDLLKQLKDVAVVVERRLEKKDFAGKTLTLKIKFYDFSLKTRSKTLSEPIFKADELYSTAIELFEEFFEIKYGKKSAIKAIRLLGISLSHPNSENEDPNLFLNL</sequence>
<protein>
    <recommendedName>
        <fullName evidence="1">DNA polymerase IV</fullName>
        <shortName evidence="1">Pol IV</shortName>
        <ecNumber evidence="1">2.7.7.7</ecNumber>
    </recommendedName>
</protein>
<name>DPO4_LEPIN</name>
<gene>
    <name evidence="1" type="primary">dinB</name>
    <name type="ordered locus">LA_0503</name>
</gene>
<comment type="function">
    <text evidence="1">Poorly processive, error-prone DNA polymerase involved in untargeted mutagenesis. Copies undamaged DNA at stalled replication forks, which arise in vivo from mismatched or misaligned primer ends. These misaligned primers can be extended by PolIV. Exhibits no 3'-5' exonuclease (proofreading) activity. May be involved in translesional synthesis, in conjunction with the beta clamp from PolIII.</text>
</comment>
<comment type="catalytic activity">
    <reaction evidence="1">
        <text>DNA(n) + a 2'-deoxyribonucleoside 5'-triphosphate = DNA(n+1) + diphosphate</text>
        <dbReference type="Rhea" id="RHEA:22508"/>
        <dbReference type="Rhea" id="RHEA-COMP:17339"/>
        <dbReference type="Rhea" id="RHEA-COMP:17340"/>
        <dbReference type="ChEBI" id="CHEBI:33019"/>
        <dbReference type="ChEBI" id="CHEBI:61560"/>
        <dbReference type="ChEBI" id="CHEBI:173112"/>
        <dbReference type="EC" id="2.7.7.7"/>
    </reaction>
</comment>
<comment type="cofactor">
    <cofactor evidence="1">
        <name>Mg(2+)</name>
        <dbReference type="ChEBI" id="CHEBI:18420"/>
    </cofactor>
    <text evidence="1">Binds 2 magnesium ions per subunit.</text>
</comment>
<comment type="subunit">
    <text evidence="1">Monomer.</text>
</comment>
<comment type="subcellular location">
    <subcellularLocation>
        <location evidence="1">Cytoplasm</location>
    </subcellularLocation>
</comment>
<comment type="similarity">
    <text evidence="1">Belongs to the DNA polymerase type-Y family.</text>
</comment>
<proteinExistence type="inferred from homology"/>
<evidence type="ECO:0000255" key="1">
    <source>
        <dbReference type="HAMAP-Rule" id="MF_01113"/>
    </source>
</evidence>
<organism>
    <name type="scientific">Leptospira interrogans serogroup Icterohaemorrhagiae serovar Lai (strain 56601)</name>
    <dbReference type="NCBI Taxonomy" id="189518"/>
    <lineage>
        <taxon>Bacteria</taxon>
        <taxon>Pseudomonadati</taxon>
        <taxon>Spirochaetota</taxon>
        <taxon>Spirochaetia</taxon>
        <taxon>Leptospirales</taxon>
        <taxon>Leptospiraceae</taxon>
        <taxon>Leptospira</taxon>
    </lineage>
</organism>